<accession>B8HH36</accession>
<comment type="function">
    <text evidence="1">Catalyzes the acyloin condensation reaction between C atoms 2 and 3 of pyruvate and glyceraldehyde 3-phosphate to yield 1-deoxy-D-xylulose-5-phosphate (DXP).</text>
</comment>
<comment type="catalytic activity">
    <reaction evidence="1">
        <text>D-glyceraldehyde 3-phosphate + pyruvate + H(+) = 1-deoxy-D-xylulose 5-phosphate + CO2</text>
        <dbReference type="Rhea" id="RHEA:12605"/>
        <dbReference type="ChEBI" id="CHEBI:15361"/>
        <dbReference type="ChEBI" id="CHEBI:15378"/>
        <dbReference type="ChEBI" id="CHEBI:16526"/>
        <dbReference type="ChEBI" id="CHEBI:57792"/>
        <dbReference type="ChEBI" id="CHEBI:59776"/>
        <dbReference type="EC" id="2.2.1.7"/>
    </reaction>
</comment>
<comment type="cofactor">
    <cofactor evidence="1">
        <name>Mg(2+)</name>
        <dbReference type="ChEBI" id="CHEBI:18420"/>
    </cofactor>
    <text evidence="1">Binds 1 Mg(2+) ion per subunit.</text>
</comment>
<comment type="cofactor">
    <cofactor evidence="1">
        <name>thiamine diphosphate</name>
        <dbReference type="ChEBI" id="CHEBI:58937"/>
    </cofactor>
    <text evidence="1">Binds 1 thiamine pyrophosphate per subunit.</text>
</comment>
<comment type="pathway">
    <text evidence="1">Metabolic intermediate biosynthesis; 1-deoxy-D-xylulose 5-phosphate biosynthesis; 1-deoxy-D-xylulose 5-phosphate from D-glyceraldehyde 3-phosphate and pyruvate: step 1/1.</text>
</comment>
<comment type="subunit">
    <text evidence="1">Homodimer.</text>
</comment>
<comment type="similarity">
    <text evidence="1">Belongs to the transketolase family. DXPS subfamily.</text>
</comment>
<keyword id="KW-0414">Isoprene biosynthesis</keyword>
<keyword id="KW-0460">Magnesium</keyword>
<keyword id="KW-0479">Metal-binding</keyword>
<keyword id="KW-0784">Thiamine biosynthesis</keyword>
<keyword id="KW-0786">Thiamine pyrophosphate</keyword>
<keyword id="KW-0808">Transferase</keyword>
<evidence type="ECO:0000255" key="1">
    <source>
        <dbReference type="HAMAP-Rule" id="MF_00315"/>
    </source>
</evidence>
<sequence>MGILDTIRNPQDLNDLSEEQLEQLASEIREFLITNVSQTGGHLGPNLGVVELTLAVHRIFDSPRDSIVFDTGHQSYVHKLLTGRQDFSTLRQQGGLSGYPSRAESEHDIVESSHASSSLSWADGISRARQLTGEGDRHVVAVVGDGALTGGMAWEAINNIAADKKRRVVIVVNDNGRSYAPTVGGFADYLASLRPTIDSFRAAPAYEVALDWWKKKLQNGGPAGQFTYKSLHAMKKGVKDWWAPQGMFEDLGMKYIGPVDGHNLQALEHALATARNYHGPVIVHAMTEKGHGYAPARAHEADQFHAVGIIDPETGEPTGTAGAKSWTSVFADEIAAIADERKDVVGITGAMLIPVGLHKFAAKHPDRVIDVGIAEQHALTSAAGMAFGGLHPVVAVYATFLNRAFDQLLMDVALHKAGVTIVLDRAGVTGPDGASHHGMWDMSMVQIVPGLHLAAPRDASRLREELREAVAINDAPTVVRFSKGSVGAEIEALERLSDGVDVLARRPAGSTANDVLIVSVGAMSELALDVANRLGAQGISTTVVDPRWVLPVRRSIVALASHHRLVICIEDGVRAGGVGSRIRQEMRAAGVDTALNEVGLPVEFLDHGTRSEVLERVGLTAQQITHDVVAQVLGTKVPFARPLPGQQHPTTGSLPIL</sequence>
<reference key="1">
    <citation type="submission" date="2009-01" db="EMBL/GenBank/DDBJ databases">
        <title>Complete sequence of chromosome of Arthrobacter chlorophenolicus A6.</title>
        <authorList>
            <consortium name="US DOE Joint Genome Institute"/>
            <person name="Lucas S."/>
            <person name="Copeland A."/>
            <person name="Lapidus A."/>
            <person name="Glavina del Rio T."/>
            <person name="Tice H."/>
            <person name="Bruce D."/>
            <person name="Goodwin L."/>
            <person name="Pitluck S."/>
            <person name="Goltsman E."/>
            <person name="Clum A."/>
            <person name="Larimer F."/>
            <person name="Land M."/>
            <person name="Hauser L."/>
            <person name="Kyrpides N."/>
            <person name="Mikhailova N."/>
            <person name="Jansson J."/>
            <person name="Richardson P."/>
        </authorList>
    </citation>
    <scope>NUCLEOTIDE SEQUENCE [LARGE SCALE GENOMIC DNA]</scope>
    <source>
        <strain>ATCC 700700 / DSM 12829 / CIP 107037 / JCM 12360 / KCTC 9906 / NCIMB 13794 / A6</strain>
    </source>
</reference>
<feature type="chain" id="PRO_1000132919" description="1-deoxy-D-xylulose-5-phosphate synthase">
    <location>
        <begin position="1"/>
        <end position="657"/>
    </location>
</feature>
<feature type="binding site" evidence="1">
    <location>
        <position position="73"/>
    </location>
    <ligand>
        <name>thiamine diphosphate</name>
        <dbReference type="ChEBI" id="CHEBI:58937"/>
    </ligand>
</feature>
<feature type="binding site" evidence="1">
    <location>
        <begin position="113"/>
        <end position="115"/>
    </location>
    <ligand>
        <name>thiamine diphosphate</name>
        <dbReference type="ChEBI" id="CHEBI:58937"/>
    </ligand>
</feature>
<feature type="binding site" evidence="1">
    <location>
        <position position="145"/>
    </location>
    <ligand>
        <name>Mg(2+)</name>
        <dbReference type="ChEBI" id="CHEBI:18420"/>
    </ligand>
</feature>
<feature type="binding site" evidence="1">
    <location>
        <begin position="146"/>
        <end position="147"/>
    </location>
    <ligand>
        <name>thiamine diphosphate</name>
        <dbReference type="ChEBI" id="CHEBI:58937"/>
    </ligand>
</feature>
<feature type="binding site" evidence="1">
    <location>
        <position position="175"/>
    </location>
    <ligand>
        <name>Mg(2+)</name>
        <dbReference type="ChEBI" id="CHEBI:18420"/>
    </ligand>
</feature>
<feature type="binding site" evidence="1">
    <location>
        <position position="175"/>
    </location>
    <ligand>
        <name>thiamine diphosphate</name>
        <dbReference type="ChEBI" id="CHEBI:58937"/>
    </ligand>
</feature>
<feature type="binding site" evidence="1">
    <location>
        <position position="293"/>
    </location>
    <ligand>
        <name>thiamine diphosphate</name>
        <dbReference type="ChEBI" id="CHEBI:58937"/>
    </ligand>
</feature>
<feature type="binding site" evidence="1">
    <location>
        <position position="375"/>
    </location>
    <ligand>
        <name>thiamine diphosphate</name>
        <dbReference type="ChEBI" id="CHEBI:58937"/>
    </ligand>
</feature>
<dbReference type="EC" id="2.2.1.7" evidence="1"/>
<dbReference type="EMBL" id="CP001341">
    <property type="protein sequence ID" value="ACL39625.1"/>
    <property type="molecule type" value="Genomic_DNA"/>
</dbReference>
<dbReference type="RefSeq" id="WP_015936845.1">
    <property type="nucleotide sequence ID" value="NC_011886.1"/>
</dbReference>
<dbReference type="SMR" id="B8HH36"/>
<dbReference type="STRING" id="452863.Achl_1638"/>
<dbReference type="KEGG" id="ach:Achl_1638"/>
<dbReference type="eggNOG" id="COG1154">
    <property type="taxonomic scope" value="Bacteria"/>
</dbReference>
<dbReference type="HOGENOM" id="CLU_009227_1_4_11"/>
<dbReference type="OrthoDB" id="9803371at2"/>
<dbReference type="UniPathway" id="UPA00064">
    <property type="reaction ID" value="UER00091"/>
</dbReference>
<dbReference type="Proteomes" id="UP000002505">
    <property type="component" value="Chromosome"/>
</dbReference>
<dbReference type="GO" id="GO:0005829">
    <property type="term" value="C:cytosol"/>
    <property type="evidence" value="ECO:0007669"/>
    <property type="project" value="TreeGrafter"/>
</dbReference>
<dbReference type="GO" id="GO:0008661">
    <property type="term" value="F:1-deoxy-D-xylulose-5-phosphate synthase activity"/>
    <property type="evidence" value="ECO:0007669"/>
    <property type="project" value="UniProtKB-UniRule"/>
</dbReference>
<dbReference type="GO" id="GO:0000287">
    <property type="term" value="F:magnesium ion binding"/>
    <property type="evidence" value="ECO:0007669"/>
    <property type="project" value="UniProtKB-UniRule"/>
</dbReference>
<dbReference type="GO" id="GO:0030976">
    <property type="term" value="F:thiamine pyrophosphate binding"/>
    <property type="evidence" value="ECO:0007669"/>
    <property type="project" value="UniProtKB-UniRule"/>
</dbReference>
<dbReference type="GO" id="GO:0052865">
    <property type="term" value="P:1-deoxy-D-xylulose 5-phosphate biosynthetic process"/>
    <property type="evidence" value="ECO:0007669"/>
    <property type="project" value="UniProtKB-UniPathway"/>
</dbReference>
<dbReference type="GO" id="GO:0019288">
    <property type="term" value="P:isopentenyl diphosphate biosynthetic process, methylerythritol 4-phosphate pathway"/>
    <property type="evidence" value="ECO:0007669"/>
    <property type="project" value="TreeGrafter"/>
</dbReference>
<dbReference type="GO" id="GO:0016114">
    <property type="term" value="P:terpenoid biosynthetic process"/>
    <property type="evidence" value="ECO:0007669"/>
    <property type="project" value="UniProtKB-UniRule"/>
</dbReference>
<dbReference type="GO" id="GO:0009228">
    <property type="term" value="P:thiamine biosynthetic process"/>
    <property type="evidence" value="ECO:0007669"/>
    <property type="project" value="UniProtKB-UniRule"/>
</dbReference>
<dbReference type="CDD" id="cd02007">
    <property type="entry name" value="TPP_DXS"/>
    <property type="match status" value="1"/>
</dbReference>
<dbReference type="CDD" id="cd07033">
    <property type="entry name" value="TPP_PYR_DXS_TK_like"/>
    <property type="match status" value="1"/>
</dbReference>
<dbReference type="FunFam" id="3.40.50.970:FF:000005">
    <property type="entry name" value="1-deoxy-D-xylulose-5-phosphate synthase"/>
    <property type="match status" value="1"/>
</dbReference>
<dbReference type="Gene3D" id="3.40.50.920">
    <property type="match status" value="1"/>
</dbReference>
<dbReference type="Gene3D" id="3.40.50.970">
    <property type="match status" value="2"/>
</dbReference>
<dbReference type="HAMAP" id="MF_00315">
    <property type="entry name" value="DXP_synth"/>
    <property type="match status" value="1"/>
</dbReference>
<dbReference type="InterPro" id="IPR005477">
    <property type="entry name" value="Dxylulose-5-P_synthase"/>
</dbReference>
<dbReference type="InterPro" id="IPR029061">
    <property type="entry name" value="THDP-binding"/>
</dbReference>
<dbReference type="InterPro" id="IPR009014">
    <property type="entry name" value="Transketo_C/PFOR_II"/>
</dbReference>
<dbReference type="InterPro" id="IPR005475">
    <property type="entry name" value="Transketolase-like_Pyr-bd"/>
</dbReference>
<dbReference type="InterPro" id="IPR020826">
    <property type="entry name" value="Transketolase_BS"/>
</dbReference>
<dbReference type="InterPro" id="IPR033248">
    <property type="entry name" value="Transketolase_C"/>
</dbReference>
<dbReference type="InterPro" id="IPR049557">
    <property type="entry name" value="Transketolase_CS"/>
</dbReference>
<dbReference type="NCBIfam" id="TIGR00204">
    <property type="entry name" value="dxs"/>
    <property type="match status" value="1"/>
</dbReference>
<dbReference type="NCBIfam" id="NF003933">
    <property type="entry name" value="PRK05444.2-2"/>
    <property type="match status" value="1"/>
</dbReference>
<dbReference type="PANTHER" id="PTHR43322">
    <property type="entry name" value="1-D-DEOXYXYLULOSE 5-PHOSPHATE SYNTHASE-RELATED"/>
    <property type="match status" value="1"/>
</dbReference>
<dbReference type="PANTHER" id="PTHR43322:SF5">
    <property type="entry name" value="1-DEOXY-D-XYLULOSE-5-PHOSPHATE SYNTHASE, CHLOROPLASTIC"/>
    <property type="match status" value="1"/>
</dbReference>
<dbReference type="Pfam" id="PF13292">
    <property type="entry name" value="DXP_synthase_N"/>
    <property type="match status" value="1"/>
</dbReference>
<dbReference type="Pfam" id="PF02779">
    <property type="entry name" value="Transket_pyr"/>
    <property type="match status" value="1"/>
</dbReference>
<dbReference type="Pfam" id="PF02780">
    <property type="entry name" value="Transketolase_C"/>
    <property type="match status" value="1"/>
</dbReference>
<dbReference type="SMART" id="SM00861">
    <property type="entry name" value="Transket_pyr"/>
    <property type="match status" value="1"/>
</dbReference>
<dbReference type="SUPFAM" id="SSF52518">
    <property type="entry name" value="Thiamin diphosphate-binding fold (THDP-binding)"/>
    <property type="match status" value="1"/>
</dbReference>
<dbReference type="SUPFAM" id="SSF52922">
    <property type="entry name" value="TK C-terminal domain-like"/>
    <property type="match status" value="1"/>
</dbReference>
<dbReference type="PROSITE" id="PS00801">
    <property type="entry name" value="TRANSKETOLASE_1"/>
    <property type="match status" value="1"/>
</dbReference>
<dbReference type="PROSITE" id="PS00802">
    <property type="entry name" value="TRANSKETOLASE_2"/>
    <property type="match status" value="1"/>
</dbReference>
<gene>
    <name evidence="1" type="primary">dxs</name>
    <name type="ordered locus">Achl_1638</name>
</gene>
<protein>
    <recommendedName>
        <fullName evidence="1">1-deoxy-D-xylulose-5-phosphate synthase</fullName>
        <ecNumber evidence="1">2.2.1.7</ecNumber>
    </recommendedName>
    <alternativeName>
        <fullName evidence="1">1-deoxyxylulose-5-phosphate synthase</fullName>
        <shortName evidence="1">DXP synthase</shortName>
        <shortName evidence="1">DXPS</shortName>
    </alternativeName>
</protein>
<name>DXS_PSECP</name>
<organism>
    <name type="scientific">Pseudarthrobacter chlorophenolicus (strain ATCC 700700 / DSM 12829 / CIP 107037 / JCM 12360 / KCTC 9906 / NCIMB 13794 / A6)</name>
    <name type="common">Arthrobacter chlorophenolicus</name>
    <dbReference type="NCBI Taxonomy" id="452863"/>
    <lineage>
        <taxon>Bacteria</taxon>
        <taxon>Bacillati</taxon>
        <taxon>Actinomycetota</taxon>
        <taxon>Actinomycetes</taxon>
        <taxon>Micrococcales</taxon>
        <taxon>Micrococcaceae</taxon>
        <taxon>Pseudarthrobacter</taxon>
    </lineage>
</organism>
<proteinExistence type="inferred from homology"/>